<accession>P54053</accession>
<sequence length="89" mass="10524">MPAPRYRSRSYRRIYRRTPGGRIVIHYKRRKPGKPKCAICGAELHGVPRGRPVEIRKLPKSQRRPERPYGGYLCPRCLKRLMIQKARNL</sequence>
<feature type="chain" id="PRO_0000131848" description="Large ribosomal subunit protein eL34">
    <location>
        <begin position="1"/>
        <end position="89"/>
    </location>
</feature>
<keyword id="KW-1185">Reference proteome</keyword>
<keyword id="KW-0687">Ribonucleoprotein</keyword>
<keyword id="KW-0689">Ribosomal protein</keyword>
<reference key="1">
    <citation type="journal article" date="1996" name="Science">
        <title>Complete genome sequence of the methanogenic archaeon, Methanococcus jannaschii.</title>
        <authorList>
            <person name="Bult C.J."/>
            <person name="White O."/>
            <person name="Olsen G.J."/>
            <person name="Zhou L."/>
            <person name="Fleischmann R.D."/>
            <person name="Sutton G.G."/>
            <person name="Blake J.A."/>
            <person name="FitzGerald L.M."/>
            <person name="Clayton R.A."/>
            <person name="Gocayne J.D."/>
            <person name="Kerlavage A.R."/>
            <person name="Dougherty B.A."/>
            <person name="Tomb J.-F."/>
            <person name="Adams M.D."/>
            <person name="Reich C.I."/>
            <person name="Overbeek R."/>
            <person name="Kirkness E.F."/>
            <person name="Weinstock K.G."/>
            <person name="Merrick J.M."/>
            <person name="Glodek A."/>
            <person name="Scott J.L."/>
            <person name="Geoghagen N.S.M."/>
            <person name="Weidman J.F."/>
            <person name="Fuhrmann J.L."/>
            <person name="Nguyen D."/>
            <person name="Utterback T.R."/>
            <person name="Kelley J.M."/>
            <person name="Peterson J.D."/>
            <person name="Sadow P.W."/>
            <person name="Hanna M.C."/>
            <person name="Cotton M.D."/>
            <person name="Roberts K.M."/>
            <person name="Hurst M.A."/>
            <person name="Kaine B.P."/>
            <person name="Borodovsky M."/>
            <person name="Klenk H.-P."/>
            <person name="Fraser C.M."/>
            <person name="Smith H.O."/>
            <person name="Woese C.R."/>
            <person name="Venter J.C."/>
        </authorList>
    </citation>
    <scope>NUCLEOTIDE SEQUENCE [LARGE SCALE GENOMIC DNA]</scope>
    <source>
        <strain>ATCC 43067 / DSM 2661 / JAL-1 / JCM 10045 / NBRC 100440</strain>
    </source>
</reference>
<gene>
    <name type="primary">rpl34e</name>
    <name type="ordered locus">MJ0655</name>
</gene>
<protein>
    <recommendedName>
        <fullName evidence="1">Large ribosomal subunit protein eL34</fullName>
    </recommendedName>
    <alternativeName>
        <fullName>50S ribosomal protein L34e</fullName>
    </alternativeName>
</protein>
<dbReference type="EMBL" id="L77117">
    <property type="protein sequence ID" value="AAB98650.1"/>
    <property type="molecule type" value="Genomic_DNA"/>
</dbReference>
<dbReference type="PIR" id="G64381">
    <property type="entry name" value="G64381"/>
</dbReference>
<dbReference type="RefSeq" id="WP_010870160.1">
    <property type="nucleotide sequence ID" value="NC_000909.1"/>
</dbReference>
<dbReference type="SMR" id="P54053"/>
<dbReference type="FunCoup" id="P54053">
    <property type="interactions" value="160"/>
</dbReference>
<dbReference type="STRING" id="243232.MJ_0655"/>
<dbReference type="PaxDb" id="243232-MJ_0655"/>
<dbReference type="EnsemblBacteria" id="AAB98650">
    <property type="protein sequence ID" value="AAB98650"/>
    <property type="gene ID" value="MJ_0655"/>
</dbReference>
<dbReference type="GeneID" id="1451521"/>
<dbReference type="KEGG" id="mja:MJ_0655"/>
<dbReference type="eggNOG" id="arCOG04168">
    <property type="taxonomic scope" value="Archaea"/>
</dbReference>
<dbReference type="HOGENOM" id="CLU_118652_2_0_2"/>
<dbReference type="InParanoid" id="P54053"/>
<dbReference type="OrthoDB" id="43096at2157"/>
<dbReference type="PhylomeDB" id="P54053"/>
<dbReference type="Proteomes" id="UP000000805">
    <property type="component" value="Chromosome"/>
</dbReference>
<dbReference type="GO" id="GO:1990904">
    <property type="term" value="C:ribonucleoprotein complex"/>
    <property type="evidence" value="ECO:0007669"/>
    <property type="project" value="UniProtKB-KW"/>
</dbReference>
<dbReference type="GO" id="GO:0005840">
    <property type="term" value="C:ribosome"/>
    <property type="evidence" value="ECO:0007669"/>
    <property type="project" value="UniProtKB-KW"/>
</dbReference>
<dbReference type="GO" id="GO:0003735">
    <property type="term" value="F:structural constituent of ribosome"/>
    <property type="evidence" value="ECO:0007669"/>
    <property type="project" value="InterPro"/>
</dbReference>
<dbReference type="GO" id="GO:0006412">
    <property type="term" value="P:translation"/>
    <property type="evidence" value="ECO:0007669"/>
    <property type="project" value="UniProtKB-UniRule"/>
</dbReference>
<dbReference type="Gene3D" id="6.20.340.10">
    <property type="match status" value="1"/>
</dbReference>
<dbReference type="HAMAP" id="MF_00349">
    <property type="entry name" value="Ribosomal_eL34"/>
    <property type="match status" value="1"/>
</dbReference>
<dbReference type="InterPro" id="IPR008195">
    <property type="entry name" value="Ribosomal_eL34"/>
</dbReference>
<dbReference type="InterPro" id="IPR038562">
    <property type="entry name" value="Ribosomal_eL34_C_sf"/>
</dbReference>
<dbReference type="InterPro" id="IPR018065">
    <property type="entry name" value="Ribosomal_eL34_CS"/>
</dbReference>
<dbReference type="InterPro" id="IPR047868">
    <property type="entry name" value="Ribosomal_L34e_arc-type"/>
</dbReference>
<dbReference type="NCBIfam" id="NF003143">
    <property type="entry name" value="PRK04059.1"/>
    <property type="match status" value="1"/>
</dbReference>
<dbReference type="PANTHER" id="PTHR10759">
    <property type="entry name" value="60S RIBOSOMAL PROTEIN L34"/>
    <property type="match status" value="1"/>
</dbReference>
<dbReference type="Pfam" id="PF01199">
    <property type="entry name" value="Ribosomal_L34e"/>
    <property type="match status" value="1"/>
</dbReference>
<dbReference type="PRINTS" id="PR01250">
    <property type="entry name" value="RIBOSOMALL34"/>
</dbReference>
<dbReference type="PROSITE" id="PS01145">
    <property type="entry name" value="RIBOSOMAL_L34E"/>
    <property type="match status" value="1"/>
</dbReference>
<proteinExistence type="inferred from homology"/>
<comment type="similarity">
    <text evidence="1">Belongs to the eukaryotic ribosomal protein eL34 family.</text>
</comment>
<evidence type="ECO:0000305" key="1"/>
<organism>
    <name type="scientific">Methanocaldococcus jannaschii (strain ATCC 43067 / DSM 2661 / JAL-1 / JCM 10045 / NBRC 100440)</name>
    <name type="common">Methanococcus jannaschii</name>
    <dbReference type="NCBI Taxonomy" id="243232"/>
    <lineage>
        <taxon>Archaea</taxon>
        <taxon>Methanobacteriati</taxon>
        <taxon>Methanobacteriota</taxon>
        <taxon>Methanomada group</taxon>
        <taxon>Methanococci</taxon>
        <taxon>Methanococcales</taxon>
        <taxon>Methanocaldococcaceae</taxon>
        <taxon>Methanocaldococcus</taxon>
    </lineage>
</organism>
<name>RL34_METJA</name>